<accession>Q6ADR6</accession>
<comment type="function">
    <text evidence="1">Catalyzes the reversible conversion of 2-phosphoglycerate (2-PG) into phosphoenolpyruvate (PEP). It is essential for the degradation of carbohydrates via glycolysis.</text>
</comment>
<comment type="catalytic activity">
    <reaction evidence="1">
        <text>(2R)-2-phosphoglycerate = phosphoenolpyruvate + H2O</text>
        <dbReference type="Rhea" id="RHEA:10164"/>
        <dbReference type="ChEBI" id="CHEBI:15377"/>
        <dbReference type="ChEBI" id="CHEBI:58289"/>
        <dbReference type="ChEBI" id="CHEBI:58702"/>
        <dbReference type="EC" id="4.2.1.11"/>
    </reaction>
</comment>
<comment type="cofactor">
    <cofactor evidence="1">
        <name>Mg(2+)</name>
        <dbReference type="ChEBI" id="CHEBI:18420"/>
    </cofactor>
    <text evidence="1">Binds a second Mg(2+) ion via substrate during catalysis.</text>
</comment>
<comment type="pathway">
    <text evidence="1">Carbohydrate degradation; glycolysis; pyruvate from D-glyceraldehyde 3-phosphate: step 4/5.</text>
</comment>
<comment type="subcellular location">
    <subcellularLocation>
        <location evidence="1">Cytoplasm</location>
    </subcellularLocation>
    <subcellularLocation>
        <location evidence="1">Secreted</location>
    </subcellularLocation>
    <subcellularLocation>
        <location evidence="1">Cell surface</location>
    </subcellularLocation>
    <text evidence="1">Fractions of enolase are present in both the cytoplasm and on the cell surface.</text>
</comment>
<comment type="similarity">
    <text evidence="1">Belongs to the enolase family.</text>
</comment>
<name>ENO_LEIXX</name>
<proteinExistence type="inferred from homology"/>
<keyword id="KW-0963">Cytoplasm</keyword>
<keyword id="KW-0324">Glycolysis</keyword>
<keyword id="KW-0456">Lyase</keyword>
<keyword id="KW-0460">Magnesium</keyword>
<keyword id="KW-0479">Metal-binding</keyword>
<keyword id="KW-1185">Reference proteome</keyword>
<keyword id="KW-0964">Secreted</keyword>
<feature type="chain" id="PRO_0000133911" description="Enolase">
    <location>
        <begin position="1"/>
        <end position="426"/>
    </location>
</feature>
<feature type="active site" description="Proton donor" evidence="1">
    <location>
        <position position="205"/>
    </location>
</feature>
<feature type="active site" description="Proton acceptor" evidence="1">
    <location>
        <position position="335"/>
    </location>
</feature>
<feature type="binding site" evidence="1">
    <location>
        <position position="163"/>
    </location>
    <ligand>
        <name>(2R)-2-phosphoglycerate</name>
        <dbReference type="ChEBI" id="CHEBI:58289"/>
    </ligand>
</feature>
<feature type="binding site" evidence="1">
    <location>
        <position position="242"/>
    </location>
    <ligand>
        <name>Mg(2+)</name>
        <dbReference type="ChEBI" id="CHEBI:18420"/>
    </ligand>
</feature>
<feature type="binding site" evidence="1">
    <location>
        <position position="283"/>
    </location>
    <ligand>
        <name>Mg(2+)</name>
        <dbReference type="ChEBI" id="CHEBI:18420"/>
    </ligand>
</feature>
<feature type="binding site" evidence="1">
    <location>
        <position position="310"/>
    </location>
    <ligand>
        <name>Mg(2+)</name>
        <dbReference type="ChEBI" id="CHEBI:18420"/>
    </ligand>
</feature>
<feature type="binding site" evidence="1">
    <location>
        <position position="335"/>
    </location>
    <ligand>
        <name>(2R)-2-phosphoglycerate</name>
        <dbReference type="ChEBI" id="CHEBI:58289"/>
    </ligand>
</feature>
<feature type="binding site" evidence="1">
    <location>
        <position position="364"/>
    </location>
    <ligand>
        <name>(2R)-2-phosphoglycerate</name>
        <dbReference type="ChEBI" id="CHEBI:58289"/>
    </ligand>
</feature>
<feature type="binding site" evidence="1">
    <location>
        <position position="365"/>
    </location>
    <ligand>
        <name>(2R)-2-phosphoglycerate</name>
        <dbReference type="ChEBI" id="CHEBI:58289"/>
    </ligand>
</feature>
<feature type="binding site" evidence="1">
    <location>
        <position position="386"/>
    </location>
    <ligand>
        <name>(2R)-2-phosphoglycerate</name>
        <dbReference type="ChEBI" id="CHEBI:58289"/>
    </ligand>
</feature>
<protein>
    <recommendedName>
        <fullName evidence="1">Enolase</fullName>
        <ecNumber evidence="1">4.2.1.11</ecNumber>
    </recommendedName>
    <alternativeName>
        <fullName evidence="1">2-phospho-D-glycerate hydro-lyase</fullName>
    </alternativeName>
    <alternativeName>
        <fullName evidence="1">2-phosphoglycerate dehydratase</fullName>
    </alternativeName>
</protein>
<sequence>MAAIEAVGAREILDSRGNPTVEVEVLLEDGTVSRAAVPSGASTGAFEAYELRDGDKGRYLGKGVEKAVDAVLDEIGPAIEGFEASDQRIVDEAMIELDGTDNKKRLGANAMLGVSLAVAKAAADSADLPLFRYLGGPNAHVLPVPMMNIINGGAHADTGVDIQEFMILPIGAETFSEGLRWGVETYHSLKALLKSKGLNTGLGDEGGFAPELEHNRAALDLIAEAIEKAGFTVGSQIALGLDVASTEFFENGVYRFEGQDRTAAEMSAYYTDLANNYPLVSIEDPLAEDDWEGWAHLNAEIGSTLQLVGDDLFVTNPKRLAQGIQQKAANSILVKVNQIGTLTETLDAVSLAQRSGMTAVLSHRSGETEDTTIADLAVATDSGQIKTGAPARSERVAKYNQLLRIEEELGEAAVYAGRSAFPRYQG</sequence>
<reference key="1">
    <citation type="journal article" date="2004" name="Mol. Plant Microbe Interact.">
        <title>The genome sequence of the Gram-positive sugarcane pathogen Leifsonia xyli subsp. xyli.</title>
        <authorList>
            <person name="Monteiro-Vitorello C.B."/>
            <person name="Camargo L.E.A."/>
            <person name="Van Sluys M.A."/>
            <person name="Kitajima J.P."/>
            <person name="Truffi D."/>
            <person name="do Amaral A.M."/>
            <person name="Harakava R."/>
            <person name="de Oliveira J.C.F."/>
            <person name="Wood D."/>
            <person name="de Oliveira M.C."/>
            <person name="Miyaki C.Y."/>
            <person name="Takita M.A."/>
            <person name="da Silva A.C.R."/>
            <person name="Furlan L.R."/>
            <person name="Carraro D.M."/>
            <person name="Camarotte G."/>
            <person name="Almeida N.F. Jr."/>
            <person name="Carrer H."/>
            <person name="Coutinho L.L."/>
            <person name="El-Dorry H.A."/>
            <person name="Ferro M.I.T."/>
            <person name="Gagliardi P.R."/>
            <person name="Giglioti E."/>
            <person name="Goldman M.H.S."/>
            <person name="Goldman G.H."/>
            <person name="Kimura E.T."/>
            <person name="Ferro E.S."/>
            <person name="Kuramae E.E."/>
            <person name="Lemos E.G.M."/>
            <person name="Lemos M.V.F."/>
            <person name="Mauro S.M.Z."/>
            <person name="Machado M.A."/>
            <person name="Marino C.L."/>
            <person name="Menck C.F."/>
            <person name="Nunes L.R."/>
            <person name="Oliveira R.C."/>
            <person name="Pereira G.G."/>
            <person name="Siqueira W."/>
            <person name="de Souza A.A."/>
            <person name="Tsai S.M."/>
            <person name="Zanca A.S."/>
            <person name="Simpson A.J.G."/>
            <person name="Brumbley S.M."/>
            <person name="Setubal J.C."/>
        </authorList>
    </citation>
    <scope>NUCLEOTIDE SEQUENCE [LARGE SCALE GENOMIC DNA]</scope>
    <source>
        <strain>CTCB07</strain>
    </source>
</reference>
<evidence type="ECO:0000255" key="1">
    <source>
        <dbReference type="HAMAP-Rule" id="MF_00318"/>
    </source>
</evidence>
<gene>
    <name evidence="1" type="primary">eno</name>
    <name type="ordered locus">Lxx17200</name>
</gene>
<dbReference type="EC" id="4.2.1.11" evidence="1"/>
<dbReference type="EMBL" id="AE016822">
    <property type="protein sequence ID" value="AAT89480.1"/>
    <property type="molecule type" value="Genomic_DNA"/>
</dbReference>
<dbReference type="RefSeq" id="WP_011186468.1">
    <property type="nucleotide sequence ID" value="NC_006087.1"/>
</dbReference>
<dbReference type="SMR" id="Q6ADR6"/>
<dbReference type="STRING" id="281090.Lxx17200"/>
<dbReference type="KEGG" id="lxx:Lxx17200"/>
<dbReference type="eggNOG" id="COG0148">
    <property type="taxonomic scope" value="Bacteria"/>
</dbReference>
<dbReference type="HOGENOM" id="CLU_031223_2_1_11"/>
<dbReference type="UniPathway" id="UPA00109">
    <property type="reaction ID" value="UER00187"/>
</dbReference>
<dbReference type="Proteomes" id="UP000001306">
    <property type="component" value="Chromosome"/>
</dbReference>
<dbReference type="GO" id="GO:0009986">
    <property type="term" value="C:cell surface"/>
    <property type="evidence" value="ECO:0007669"/>
    <property type="project" value="UniProtKB-SubCell"/>
</dbReference>
<dbReference type="GO" id="GO:0005576">
    <property type="term" value="C:extracellular region"/>
    <property type="evidence" value="ECO:0007669"/>
    <property type="project" value="UniProtKB-SubCell"/>
</dbReference>
<dbReference type="GO" id="GO:0000015">
    <property type="term" value="C:phosphopyruvate hydratase complex"/>
    <property type="evidence" value="ECO:0007669"/>
    <property type="project" value="InterPro"/>
</dbReference>
<dbReference type="GO" id="GO:0000287">
    <property type="term" value="F:magnesium ion binding"/>
    <property type="evidence" value="ECO:0007669"/>
    <property type="project" value="UniProtKB-UniRule"/>
</dbReference>
<dbReference type="GO" id="GO:0004634">
    <property type="term" value="F:phosphopyruvate hydratase activity"/>
    <property type="evidence" value="ECO:0007669"/>
    <property type="project" value="UniProtKB-UniRule"/>
</dbReference>
<dbReference type="GO" id="GO:0006096">
    <property type="term" value="P:glycolytic process"/>
    <property type="evidence" value="ECO:0007669"/>
    <property type="project" value="UniProtKB-UniRule"/>
</dbReference>
<dbReference type="CDD" id="cd03313">
    <property type="entry name" value="enolase"/>
    <property type="match status" value="1"/>
</dbReference>
<dbReference type="FunFam" id="3.20.20.120:FF:000001">
    <property type="entry name" value="Enolase"/>
    <property type="match status" value="1"/>
</dbReference>
<dbReference type="FunFam" id="3.30.390.10:FF:000001">
    <property type="entry name" value="Enolase"/>
    <property type="match status" value="1"/>
</dbReference>
<dbReference type="Gene3D" id="3.20.20.120">
    <property type="entry name" value="Enolase-like C-terminal domain"/>
    <property type="match status" value="1"/>
</dbReference>
<dbReference type="Gene3D" id="3.30.390.10">
    <property type="entry name" value="Enolase-like, N-terminal domain"/>
    <property type="match status" value="1"/>
</dbReference>
<dbReference type="HAMAP" id="MF_00318">
    <property type="entry name" value="Enolase"/>
    <property type="match status" value="1"/>
</dbReference>
<dbReference type="InterPro" id="IPR000941">
    <property type="entry name" value="Enolase"/>
</dbReference>
<dbReference type="InterPro" id="IPR036849">
    <property type="entry name" value="Enolase-like_C_sf"/>
</dbReference>
<dbReference type="InterPro" id="IPR029017">
    <property type="entry name" value="Enolase-like_N"/>
</dbReference>
<dbReference type="InterPro" id="IPR020810">
    <property type="entry name" value="Enolase_C"/>
</dbReference>
<dbReference type="InterPro" id="IPR020809">
    <property type="entry name" value="Enolase_CS"/>
</dbReference>
<dbReference type="InterPro" id="IPR020811">
    <property type="entry name" value="Enolase_N"/>
</dbReference>
<dbReference type="NCBIfam" id="TIGR01060">
    <property type="entry name" value="eno"/>
    <property type="match status" value="1"/>
</dbReference>
<dbReference type="PANTHER" id="PTHR11902">
    <property type="entry name" value="ENOLASE"/>
    <property type="match status" value="1"/>
</dbReference>
<dbReference type="PANTHER" id="PTHR11902:SF1">
    <property type="entry name" value="ENOLASE"/>
    <property type="match status" value="1"/>
</dbReference>
<dbReference type="Pfam" id="PF00113">
    <property type="entry name" value="Enolase_C"/>
    <property type="match status" value="1"/>
</dbReference>
<dbReference type="Pfam" id="PF03952">
    <property type="entry name" value="Enolase_N"/>
    <property type="match status" value="1"/>
</dbReference>
<dbReference type="PIRSF" id="PIRSF001400">
    <property type="entry name" value="Enolase"/>
    <property type="match status" value="1"/>
</dbReference>
<dbReference type="PRINTS" id="PR00148">
    <property type="entry name" value="ENOLASE"/>
</dbReference>
<dbReference type="SFLD" id="SFLDS00001">
    <property type="entry name" value="Enolase"/>
    <property type="match status" value="1"/>
</dbReference>
<dbReference type="SFLD" id="SFLDF00002">
    <property type="entry name" value="enolase"/>
    <property type="match status" value="1"/>
</dbReference>
<dbReference type="SMART" id="SM01192">
    <property type="entry name" value="Enolase_C"/>
    <property type="match status" value="1"/>
</dbReference>
<dbReference type="SMART" id="SM01193">
    <property type="entry name" value="Enolase_N"/>
    <property type="match status" value="1"/>
</dbReference>
<dbReference type="SUPFAM" id="SSF51604">
    <property type="entry name" value="Enolase C-terminal domain-like"/>
    <property type="match status" value="1"/>
</dbReference>
<dbReference type="SUPFAM" id="SSF54826">
    <property type="entry name" value="Enolase N-terminal domain-like"/>
    <property type="match status" value="1"/>
</dbReference>
<dbReference type="PROSITE" id="PS00164">
    <property type="entry name" value="ENOLASE"/>
    <property type="match status" value="1"/>
</dbReference>
<organism>
    <name type="scientific">Leifsonia xyli subsp. xyli (strain CTCB07)</name>
    <dbReference type="NCBI Taxonomy" id="281090"/>
    <lineage>
        <taxon>Bacteria</taxon>
        <taxon>Bacillati</taxon>
        <taxon>Actinomycetota</taxon>
        <taxon>Actinomycetes</taxon>
        <taxon>Micrococcales</taxon>
        <taxon>Microbacteriaceae</taxon>
        <taxon>Leifsonia</taxon>
    </lineage>
</organism>